<organism>
    <name type="scientific">Listeria welshimeri serovar 6b (strain ATCC 35897 / DSM 20650 / CCUG 15529 / CIP 8149 / NCTC 11857 / SLCC 5334 / V8)</name>
    <dbReference type="NCBI Taxonomy" id="386043"/>
    <lineage>
        <taxon>Bacteria</taxon>
        <taxon>Bacillati</taxon>
        <taxon>Bacillota</taxon>
        <taxon>Bacilli</taxon>
        <taxon>Bacillales</taxon>
        <taxon>Listeriaceae</taxon>
        <taxon>Listeria</taxon>
    </lineage>
</organism>
<keyword id="KW-0963">Cytoplasm</keyword>
<keyword id="KW-0210">Decarboxylase</keyword>
<keyword id="KW-0456">Lyase</keyword>
<keyword id="KW-0627">Porphyrin biosynthesis</keyword>
<dbReference type="EC" id="4.1.1.37" evidence="1"/>
<dbReference type="EMBL" id="AM263198">
    <property type="protein sequence ID" value="CAK21647.1"/>
    <property type="molecule type" value="Genomic_DNA"/>
</dbReference>
<dbReference type="RefSeq" id="WP_011702980.1">
    <property type="nucleotide sequence ID" value="NC_008555.1"/>
</dbReference>
<dbReference type="SMR" id="A0AKW5"/>
<dbReference type="STRING" id="386043.lwe2229"/>
<dbReference type="GeneID" id="61190132"/>
<dbReference type="KEGG" id="lwe:lwe2229"/>
<dbReference type="eggNOG" id="COG0407">
    <property type="taxonomic scope" value="Bacteria"/>
</dbReference>
<dbReference type="HOGENOM" id="CLU_040933_0_1_9"/>
<dbReference type="OrthoDB" id="9806656at2"/>
<dbReference type="UniPathway" id="UPA00251">
    <property type="reaction ID" value="UER00321"/>
</dbReference>
<dbReference type="Proteomes" id="UP000000779">
    <property type="component" value="Chromosome"/>
</dbReference>
<dbReference type="GO" id="GO:0005829">
    <property type="term" value="C:cytosol"/>
    <property type="evidence" value="ECO:0007669"/>
    <property type="project" value="TreeGrafter"/>
</dbReference>
<dbReference type="GO" id="GO:0004853">
    <property type="term" value="F:uroporphyrinogen decarboxylase activity"/>
    <property type="evidence" value="ECO:0007669"/>
    <property type="project" value="UniProtKB-UniRule"/>
</dbReference>
<dbReference type="GO" id="GO:0006782">
    <property type="term" value="P:protoporphyrinogen IX biosynthetic process"/>
    <property type="evidence" value="ECO:0007669"/>
    <property type="project" value="UniProtKB-UniRule"/>
</dbReference>
<dbReference type="CDD" id="cd00717">
    <property type="entry name" value="URO-D"/>
    <property type="match status" value="1"/>
</dbReference>
<dbReference type="FunFam" id="3.20.20.210:FF:000005">
    <property type="entry name" value="Uroporphyrinogen decarboxylase"/>
    <property type="match status" value="1"/>
</dbReference>
<dbReference type="Gene3D" id="3.20.20.210">
    <property type="match status" value="1"/>
</dbReference>
<dbReference type="HAMAP" id="MF_00218">
    <property type="entry name" value="URO_D"/>
    <property type="match status" value="1"/>
</dbReference>
<dbReference type="InterPro" id="IPR038071">
    <property type="entry name" value="UROD/MetE-like_sf"/>
</dbReference>
<dbReference type="InterPro" id="IPR006361">
    <property type="entry name" value="Uroporphyrinogen_deCO2ase_HemE"/>
</dbReference>
<dbReference type="InterPro" id="IPR000257">
    <property type="entry name" value="Uroporphyrinogen_deCOase"/>
</dbReference>
<dbReference type="NCBIfam" id="TIGR01464">
    <property type="entry name" value="hemE"/>
    <property type="match status" value="1"/>
</dbReference>
<dbReference type="PANTHER" id="PTHR21091">
    <property type="entry name" value="METHYLTETRAHYDROFOLATE:HOMOCYSTEINE METHYLTRANSFERASE RELATED"/>
    <property type="match status" value="1"/>
</dbReference>
<dbReference type="PANTHER" id="PTHR21091:SF169">
    <property type="entry name" value="UROPORPHYRINOGEN DECARBOXYLASE"/>
    <property type="match status" value="1"/>
</dbReference>
<dbReference type="Pfam" id="PF01208">
    <property type="entry name" value="URO-D"/>
    <property type="match status" value="1"/>
</dbReference>
<dbReference type="SUPFAM" id="SSF51726">
    <property type="entry name" value="UROD/MetE-like"/>
    <property type="match status" value="1"/>
</dbReference>
<dbReference type="PROSITE" id="PS00906">
    <property type="entry name" value="UROD_1"/>
    <property type="match status" value="1"/>
</dbReference>
<dbReference type="PROSITE" id="PS00907">
    <property type="entry name" value="UROD_2"/>
    <property type="match status" value="1"/>
</dbReference>
<comment type="function">
    <text evidence="1">Catalyzes the decarboxylation of four acetate groups of uroporphyrinogen-III to yield coproporphyrinogen-III.</text>
</comment>
<comment type="catalytic activity">
    <reaction evidence="1">
        <text>uroporphyrinogen III + 4 H(+) = coproporphyrinogen III + 4 CO2</text>
        <dbReference type="Rhea" id="RHEA:19865"/>
        <dbReference type="ChEBI" id="CHEBI:15378"/>
        <dbReference type="ChEBI" id="CHEBI:16526"/>
        <dbReference type="ChEBI" id="CHEBI:57308"/>
        <dbReference type="ChEBI" id="CHEBI:57309"/>
        <dbReference type="EC" id="4.1.1.37"/>
    </reaction>
</comment>
<comment type="pathway">
    <text evidence="1">Porphyrin-containing compound metabolism; protoporphyrin-IX biosynthesis; coproporphyrinogen-III from 5-aminolevulinate: step 4/4.</text>
</comment>
<comment type="subunit">
    <text evidence="1">Homodimer.</text>
</comment>
<comment type="subcellular location">
    <subcellularLocation>
        <location evidence="1">Cytoplasm</location>
    </subcellularLocation>
</comment>
<comment type="similarity">
    <text evidence="1">Belongs to the uroporphyrinogen decarboxylase family.</text>
</comment>
<protein>
    <recommendedName>
        <fullName evidence="1">Uroporphyrinogen decarboxylase</fullName>
        <shortName evidence="1">UPD</shortName>
        <shortName evidence="1">URO-D</shortName>
        <ecNumber evidence="1">4.1.1.37</ecNumber>
    </recommendedName>
</protein>
<accession>A0AKW5</accession>
<reference key="1">
    <citation type="journal article" date="2006" name="J. Bacteriol.">
        <title>Whole-genome sequence of Listeria welshimeri reveals common steps in genome reduction with Listeria innocua as compared to Listeria monocytogenes.</title>
        <authorList>
            <person name="Hain T."/>
            <person name="Steinweg C."/>
            <person name="Kuenne C.T."/>
            <person name="Billion A."/>
            <person name="Ghai R."/>
            <person name="Chatterjee S.S."/>
            <person name="Domann E."/>
            <person name="Kaerst U."/>
            <person name="Goesmann A."/>
            <person name="Bekel T."/>
            <person name="Bartels D."/>
            <person name="Kaiser O."/>
            <person name="Meyer F."/>
            <person name="Puehler A."/>
            <person name="Weisshaar B."/>
            <person name="Wehland J."/>
            <person name="Liang C."/>
            <person name="Dandekar T."/>
            <person name="Lampidis R."/>
            <person name="Kreft J."/>
            <person name="Goebel W."/>
            <person name="Chakraborty T."/>
        </authorList>
    </citation>
    <scope>NUCLEOTIDE SEQUENCE [LARGE SCALE GENOMIC DNA]</scope>
    <source>
        <strain>ATCC 35897 / DSM 20650 / CCUG 15529 / CIP 8149 / NCTC 11857 / SLCC 5334 / V8</strain>
    </source>
</reference>
<evidence type="ECO:0000255" key="1">
    <source>
        <dbReference type="HAMAP-Rule" id="MF_00218"/>
    </source>
</evidence>
<name>DCUP_LISW6</name>
<gene>
    <name evidence="1" type="primary">hemE</name>
    <name type="ordered locus">lwe2229</name>
</gene>
<proteinExistence type="inferred from homology"/>
<sequence>MTKITNDLFLRAARKEQVDKIPVWYMRQAGRSQPEYRKLKEKYSLFEITHQPEICAYVTKLPVDQYGVDAAILYKDIMTPLPGMGIDVEIKSGIGPVIHNPIRTFQDVDKLSIFKPEIEVPYVLDTIKLLADDMLEVPLIGFAGAPFTLASYMIEGGPSKNYHLTKSFMYREPEVWSILMEKLGRMTATYLIAQINAGASAVQLFDSWVGALSRADYTKYIRPVIEMIVREVKAVHPTTPIIMQAVGASHLLEEWETMPLDVVGVDWRETLTGARKKVPSKAIQGNLDPSTLLAPEKCLEEAERIIQEGILKPGYIFNLGHGVFPEVQPEMLKKLTNYIHDRSEILLKKG</sequence>
<feature type="chain" id="PRO_1000023914" description="Uroporphyrinogen decarboxylase">
    <location>
        <begin position="1"/>
        <end position="350"/>
    </location>
</feature>
<feature type="binding site" evidence="1">
    <location>
        <begin position="27"/>
        <end position="31"/>
    </location>
    <ligand>
        <name>substrate</name>
    </ligand>
</feature>
<feature type="binding site" evidence="1">
    <location>
        <position position="46"/>
    </location>
    <ligand>
        <name>substrate</name>
    </ligand>
</feature>
<feature type="binding site" evidence="1">
    <location>
        <position position="76"/>
    </location>
    <ligand>
        <name>substrate</name>
    </ligand>
</feature>
<feature type="binding site" evidence="1">
    <location>
        <position position="152"/>
    </location>
    <ligand>
        <name>substrate</name>
    </ligand>
</feature>
<feature type="binding site" evidence="1">
    <location>
        <position position="207"/>
    </location>
    <ligand>
        <name>substrate</name>
    </ligand>
</feature>
<feature type="binding site" evidence="1">
    <location>
        <position position="321"/>
    </location>
    <ligand>
        <name>substrate</name>
    </ligand>
</feature>
<feature type="site" description="Transition state stabilizer" evidence="1">
    <location>
        <position position="76"/>
    </location>
</feature>